<protein>
    <recommendedName>
        <fullName>GDP-mannose transporter</fullName>
        <shortName>GMT</shortName>
    </recommendedName>
</protein>
<name>GMT_PICST</name>
<feature type="chain" id="PRO_0000333535" description="GDP-mannose transporter">
    <location>
        <begin position="1"/>
        <end position="327"/>
    </location>
</feature>
<feature type="topological domain" description="Cytoplasmic" evidence="1">
    <location>
        <begin position="1"/>
        <end position="4"/>
    </location>
</feature>
<feature type="transmembrane region" description="Helical" evidence="2">
    <location>
        <begin position="5"/>
        <end position="25"/>
    </location>
</feature>
<feature type="topological domain" description="Lumenal" evidence="1">
    <location>
        <begin position="26"/>
        <end position="36"/>
    </location>
</feature>
<feature type="transmembrane region" description="Helical" evidence="2">
    <location>
        <begin position="37"/>
        <end position="57"/>
    </location>
</feature>
<feature type="topological domain" description="Cytoplasmic" evidence="1">
    <location>
        <begin position="58"/>
        <end position="78"/>
    </location>
</feature>
<feature type="transmembrane region" description="Helical" evidence="2">
    <location>
        <begin position="79"/>
        <end position="93"/>
    </location>
</feature>
<feature type="topological domain" description="Lumenal" evidence="1">
    <location>
        <begin position="94"/>
        <end position="102"/>
    </location>
</feature>
<feature type="transmembrane region" description="Helical" evidence="2">
    <location>
        <begin position="103"/>
        <end position="125"/>
    </location>
</feature>
<feature type="topological domain" description="Cytoplasmic" evidence="1">
    <location>
        <begin position="126"/>
        <end position="131"/>
    </location>
</feature>
<feature type="transmembrane region" description="Helical" evidence="2">
    <location>
        <begin position="132"/>
        <end position="149"/>
    </location>
</feature>
<feature type="topological domain" description="Lumenal" evidence="1">
    <location>
        <begin position="150"/>
        <end position="163"/>
    </location>
</feature>
<feature type="transmembrane region" description="Helical" evidence="2">
    <location>
        <begin position="164"/>
        <end position="184"/>
    </location>
</feature>
<feature type="topological domain" description="Cytoplasmic" evidence="1">
    <location>
        <begin position="185"/>
        <end position="207"/>
    </location>
</feature>
<feature type="transmembrane region" description="Helical" evidence="2">
    <location>
        <begin position="208"/>
        <end position="228"/>
    </location>
</feature>
<feature type="topological domain" description="Lumenal" evidence="1">
    <location>
        <begin position="229"/>
        <end position="238"/>
    </location>
</feature>
<feature type="transmembrane region" description="Helical" evidence="2">
    <location>
        <begin position="239"/>
        <end position="259"/>
    </location>
</feature>
<feature type="topological domain" description="Cytoplasmic" evidence="1">
    <location>
        <begin position="260"/>
        <end position="266"/>
    </location>
</feature>
<feature type="transmembrane region" description="Helical" evidence="2">
    <location>
        <begin position="267"/>
        <end position="289"/>
    </location>
</feature>
<feature type="topological domain" description="Lumenal" evidence="1">
    <location>
        <begin position="290"/>
        <end position="292"/>
    </location>
</feature>
<feature type="transmembrane region" description="Helical" evidence="2">
    <location>
        <begin position="293"/>
        <end position="312"/>
    </location>
</feature>
<feature type="topological domain" description="Cytoplasmic" evidence="1">
    <location>
        <begin position="313"/>
        <end position="327"/>
    </location>
</feature>
<feature type="glycosylation site" description="N-linked (GlcNAc...) asparagine" evidence="2">
    <location>
        <position position="158"/>
    </location>
</feature>
<feature type="glycosylation site" description="N-linked (GlcNAc...) asparagine" evidence="2">
    <location>
        <position position="234"/>
    </location>
</feature>
<organism>
    <name type="scientific">Scheffersomyces stipitis (strain ATCC 58785 / CBS 6054 / NBRC 10063 / NRRL Y-11545)</name>
    <name type="common">Yeast</name>
    <name type="synonym">Pichia stipitis</name>
    <dbReference type="NCBI Taxonomy" id="322104"/>
    <lineage>
        <taxon>Eukaryota</taxon>
        <taxon>Fungi</taxon>
        <taxon>Dikarya</taxon>
        <taxon>Ascomycota</taxon>
        <taxon>Saccharomycotina</taxon>
        <taxon>Pichiomycetes</taxon>
        <taxon>Debaryomycetaceae</taxon>
        <taxon>Scheffersomyces</taxon>
    </lineage>
</organism>
<sequence length="327" mass="35766">MESSLAAIANSGPISIFSYCVSSILMTVTNKYVLSGFSFNMNFLLLAVQSIVCIVTIGSLKSFGVITYRQFNKEEARKWSPIAVLLVIMIYTSSKALQYLSIPVYTIFKNLTIILIAYGEVLWFGGKVTTMALSSFLLMVFSSVVAWYGDEAVSGSGNESFIALYLGYFWMATNCFASAAFVLIMRKRIKLTNFKDFDTMYYNNLLSIPILLASSIIFEDWSAENLAVNFPSDNRTATIAAMVLSGASSVGISYCSAWCVRVTSSTTYSMVGALNKLPIALSGLVFFPAAVNFWSVASIFVGFAAGLVYAVAKQRQQKENVSLPSSK</sequence>
<comment type="function">
    <text evidence="1">Involved in the import of GDP-mannose from the cytoplasm into the Golgi lumen.</text>
</comment>
<comment type="subunit">
    <text evidence="1">Homooligomer.</text>
</comment>
<comment type="subcellular location">
    <subcellularLocation>
        <location evidence="1">Golgi apparatus membrane</location>
        <topology evidence="1">Multi-pass membrane protein</topology>
    </subcellularLocation>
    <subcellularLocation>
        <location evidence="1">Cytoplasmic vesicle membrane</location>
        <topology evidence="1">Multi-pass membrane protein</topology>
    </subcellularLocation>
    <subcellularLocation>
        <location evidence="1">Endoplasmic reticulum membrane</location>
        <topology evidence="1">Multi-pass membrane protein</topology>
    </subcellularLocation>
</comment>
<comment type="similarity">
    <text evidence="3">Belongs to the TPT transporter family. SLC35D subfamily.</text>
</comment>
<proteinExistence type="inferred from homology"/>
<reference key="1">
    <citation type="journal article" date="2007" name="Nat. Biotechnol.">
        <title>Genome sequence of the lignocellulose-bioconverting and xylose-fermenting yeast Pichia stipitis.</title>
        <authorList>
            <person name="Jeffries T.W."/>
            <person name="Grigoriev I.V."/>
            <person name="Grimwood J."/>
            <person name="Laplaza J.M."/>
            <person name="Aerts A."/>
            <person name="Salamov A."/>
            <person name="Schmutz J."/>
            <person name="Lindquist E."/>
            <person name="Dehal P."/>
            <person name="Shapiro H."/>
            <person name="Jin Y.-S."/>
            <person name="Passoth V."/>
            <person name="Richardson P.M."/>
        </authorList>
    </citation>
    <scope>NUCLEOTIDE SEQUENCE [LARGE SCALE GENOMIC DNA]</scope>
    <source>
        <strain>ATCC 58785 / CBS 6054 / NBRC 10063 / NRRL Y-11545</strain>
    </source>
</reference>
<evidence type="ECO:0000250" key="1"/>
<evidence type="ECO:0000255" key="2"/>
<evidence type="ECO:0000305" key="3"/>
<accession>A3LWX1</accession>
<dbReference type="EMBL" id="CP000500">
    <property type="protein sequence ID" value="ABN67707.1"/>
    <property type="molecule type" value="Genomic_DNA"/>
</dbReference>
<dbReference type="RefSeq" id="XP_001385736.1">
    <property type="nucleotide sequence ID" value="XM_001385699.1"/>
</dbReference>
<dbReference type="SMR" id="A3LWX1"/>
<dbReference type="FunCoup" id="A3LWX1">
    <property type="interactions" value="565"/>
</dbReference>
<dbReference type="STRING" id="322104.A3LWX1"/>
<dbReference type="GlyCosmos" id="A3LWX1">
    <property type="glycosylation" value="2 sites, No reported glycans"/>
</dbReference>
<dbReference type="GeneID" id="4840002"/>
<dbReference type="KEGG" id="pic:PICST_48772"/>
<dbReference type="eggNOG" id="KOG1444">
    <property type="taxonomic scope" value="Eukaryota"/>
</dbReference>
<dbReference type="HOGENOM" id="CLU_025360_1_2_1"/>
<dbReference type="InParanoid" id="A3LWX1"/>
<dbReference type="OMA" id="VWMLINC"/>
<dbReference type="OrthoDB" id="417037at2759"/>
<dbReference type="Proteomes" id="UP000002258">
    <property type="component" value="Chromosome 6"/>
</dbReference>
<dbReference type="GO" id="GO:0030659">
    <property type="term" value="C:cytoplasmic vesicle membrane"/>
    <property type="evidence" value="ECO:0007669"/>
    <property type="project" value="UniProtKB-SubCell"/>
</dbReference>
<dbReference type="GO" id="GO:0005789">
    <property type="term" value="C:endoplasmic reticulum membrane"/>
    <property type="evidence" value="ECO:0007669"/>
    <property type="project" value="UniProtKB-SubCell"/>
</dbReference>
<dbReference type="GO" id="GO:0000139">
    <property type="term" value="C:Golgi membrane"/>
    <property type="evidence" value="ECO:0007669"/>
    <property type="project" value="UniProtKB-SubCell"/>
</dbReference>
<dbReference type="InterPro" id="IPR050186">
    <property type="entry name" value="TPT_transporter"/>
</dbReference>
<dbReference type="NCBIfam" id="TIGR00803">
    <property type="entry name" value="nst"/>
    <property type="match status" value="1"/>
</dbReference>
<dbReference type="PANTHER" id="PTHR11132">
    <property type="entry name" value="SOLUTE CARRIER FAMILY 35"/>
    <property type="match status" value="1"/>
</dbReference>
<dbReference type="SUPFAM" id="SSF103481">
    <property type="entry name" value="Multidrug resistance efflux transporter EmrE"/>
    <property type="match status" value="1"/>
</dbReference>
<keyword id="KW-0968">Cytoplasmic vesicle</keyword>
<keyword id="KW-0256">Endoplasmic reticulum</keyword>
<keyword id="KW-0325">Glycoprotein</keyword>
<keyword id="KW-0333">Golgi apparatus</keyword>
<keyword id="KW-0472">Membrane</keyword>
<keyword id="KW-1185">Reference proteome</keyword>
<keyword id="KW-0762">Sugar transport</keyword>
<keyword id="KW-0812">Transmembrane</keyword>
<keyword id="KW-1133">Transmembrane helix</keyword>
<keyword id="KW-0813">Transport</keyword>
<gene>
    <name type="primary">VRG4</name>
    <name type="ORF">PICST_48772</name>
</gene>